<accession>A1WVB5</accession>
<evidence type="ECO:0000255" key="1">
    <source>
        <dbReference type="HAMAP-Rule" id="MF_01342"/>
    </source>
</evidence>
<evidence type="ECO:0000305" key="2"/>
<protein>
    <recommendedName>
        <fullName evidence="1">Large ribosomal subunit protein uL16</fullName>
    </recommendedName>
    <alternativeName>
        <fullName evidence="2">50S ribosomal protein L16</fullName>
    </alternativeName>
</protein>
<reference key="1">
    <citation type="submission" date="2006-12" db="EMBL/GenBank/DDBJ databases">
        <title>Complete sequence of Halorhodospira halophila SL1.</title>
        <authorList>
            <consortium name="US DOE Joint Genome Institute"/>
            <person name="Copeland A."/>
            <person name="Lucas S."/>
            <person name="Lapidus A."/>
            <person name="Barry K."/>
            <person name="Detter J.C."/>
            <person name="Glavina del Rio T."/>
            <person name="Hammon N."/>
            <person name="Israni S."/>
            <person name="Dalin E."/>
            <person name="Tice H."/>
            <person name="Pitluck S."/>
            <person name="Saunders E."/>
            <person name="Brettin T."/>
            <person name="Bruce D."/>
            <person name="Han C."/>
            <person name="Tapia R."/>
            <person name="Schmutz J."/>
            <person name="Larimer F."/>
            <person name="Land M."/>
            <person name="Hauser L."/>
            <person name="Kyrpides N."/>
            <person name="Mikhailova N."/>
            <person name="Hoff W."/>
            <person name="Richardson P."/>
        </authorList>
    </citation>
    <scope>NUCLEOTIDE SEQUENCE [LARGE SCALE GENOMIC DNA]</scope>
    <source>
        <strain>DSM 244 / SL1</strain>
    </source>
</reference>
<proteinExistence type="inferred from homology"/>
<organism>
    <name type="scientific">Halorhodospira halophila (strain DSM 244 / SL1)</name>
    <name type="common">Ectothiorhodospira halophila (strain DSM 244 / SL1)</name>
    <dbReference type="NCBI Taxonomy" id="349124"/>
    <lineage>
        <taxon>Bacteria</taxon>
        <taxon>Pseudomonadati</taxon>
        <taxon>Pseudomonadota</taxon>
        <taxon>Gammaproteobacteria</taxon>
        <taxon>Chromatiales</taxon>
        <taxon>Ectothiorhodospiraceae</taxon>
        <taxon>Halorhodospira</taxon>
    </lineage>
</organism>
<dbReference type="EMBL" id="CP000544">
    <property type="protein sequence ID" value="ABM61627.1"/>
    <property type="molecule type" value="Genomic_DNA"/>
</dbReference>
<dbReference type="RefSeq" id="WP_011813650.1">
    <property type="nucleotide sequence ID" value="NC_008789.1"/>
</dbReference>
<dbReference type="SMR" id="A1WVB5"/>
<dbReference type="STRING" id="349124.Hhal_0851"/>
<dbReference type="KEGG" id="hha:Hhal_0851"/>
<dbReference type="eggNOG" id="COG0197">
    <property type="taxonomic scope" value="Bacteria"/>
</dbReference>
<dbReference type="HOGENOM" id="CLU_078858_2_1_6"/>
<dbReference type="OrthoDB" id="9802589at2"/>
<dbReference type="Proteomes" id="UP000000647">
    <property type="component" value="Chromosome"/>
</dbReference>
<dbReference type="GO" id="GO:0022625">
    <property type="term" value="C:cytosolic large ribosomal subunit"/>
    <property type="evidence" value="ECO:0007669"/>
    <property type="project" value="TreeGrafter"/>
</dbReference>
<dbReference type="GO" id="GO:0019843">
    <property type="term" value="F:rRNA binding"/>
    <property type="evidence" value="ECO:0007669"/>
    <property type="project" value="UniProtKB-UniRule"/>
</dbReference>
<dbReference type="GO" id="GO:0003735">
    <property type="term" value="F:structural constituent of ribosome"/>
    <property type="evidence" value="ECO:0007669"/>
    <property type="project" value="InterPro"/>
</dbReference>
<dbReference type="GO" id="GO:0000049">
    <property type="term" value="F:tRNA binding"/>
    <property type="evidence" value="ECO:0007669"/>
    <property type="project" value="UniProtKB-KW"/>
</dbReference>
<dbReference type="GO" id="GO:0006412">
    <property type="term" value="P:translation"/>
    <property type="evidence" value="ECO:0007669"/>
    <property type="project" value="UniProtKB-UniRule"/>
</dbReference>
<dbReference type="CDD" id="cd01433">
    <property type="entry name" value="Ribosomal_L16_L10e"/>
    <property type="match status" value="1"/>
</dbReference>
<dbReference type="FunFam" id="3.90.1170.10:FF:000001">
    <property type="entry name" value="50S ribosomal protein L16"/>
    <property type="match status" value="1"/>
</dbReference>
<dbReference type="Gene3D" id="3.90.1170.10">
    <property type="entry name" value="Ribosomal protein L10e/L16"/>
    <property type="match status" value="1"/>
</dbReference>
<dbReference type="HAMAP" id="MF_01342">
    <property type="entry name" value="Ribosomal_uL16"/>
    <property type="match status" value="1"/>
</dbReference>
<dbReference type="InterPro" id="IPR047873">
    <property type="entry name" value="Ribosomal_uL16"/>
</dbReference>
<dbReference type="InterPro" id="IPR000114">
    <property type="entry name" value="Ribosomal_uL16_bact-type"/>
</dbReference>
<dbReference type="InterPro" id="IPR020798">
    <property type="entry name" value="Ribosomal_uL16_CS"/>
</dbReference>
<dbReference type="InterPro" id="IPR016180">
    <property type="entry name" value="Ribosomal_uL16_dom"/>
</dbReference>
<dbReference type="InterPro" id="IPR036920">
    <property type="entry name" value="Ribosomal_uL16_sf"/>
</dbReference>
<dbReference type="NCBIfam" id="TIGR01164">
    <property type="entry name" value="rplP_bact"/>
    <property type="match status" value="1"/>
</dbReference>
<dbReference type="PANTHER" id="PTHR12220">
    <property type="entry name" value="50S/60S RIBOSOMAL PROTEIN L16"/>
    <property type="match status" value="1"/>
</dbReference>
<dbReference type="PANTHER" id="PTHR12220:SF13">
    <property type="entry name" value="LARGE RIBOSOMAL SUBUNIT PROTEIN UL16M"/>
    <property type="match status" value="1"/>
</dbReference>
<dbReference type="Pfam" id="PF00252">
    <property type="entry name" value="Ribosomal_L16"/>
    <property type="match status" value="1"/>
</dbReference>
<dbReference type="PRINTS" id="PR00060">
    <property type="entry name" value="RIBOSOMALL16"/>
</dbReference>
<dbReference type="SUPFAM" id="SSF54686">
    <property type="entry name" value="Ribosomal protein L16p/L10e"/>
    <property type="match status" value="1"/>
</dbReference>
<dbReference type="PROSITE" id="PS00586">
    <property type="entry name" value="RIBOSOMAL_L16_1"/>
    <property type="match status" value="1"/>
</dbReference>
<dbReference type="PROSITE" id="PS00701">
    <property type="entry name" value="RIBOSOMAL_L16_2"/>
    <property type="match status" value="1"/>
</dbReference>
<sequence length="137" mass="15583">MLQPKRTKYRKKQKGRCSGLATRGDRVSFGEFGLKATTRGPITSRQIEAARRAINRYIRRGGKIWIRVFPDKPVTEKPLEVRMGKGKGNVDHWCEPIAPGRVLYELEGVSEEVAREAFRRAAAKLPVKTTFVNRTVM</sequence>
<keyword id="KW-1185">Reference proteome</keyword>
<keyword id="KW-0687">Ribonucleoprotein</keyword>
<keyword id="KW-0689">Ribosomal protein</keyword>
<keyword id="KW-0694">RNA-binding</keyword>
<keyword id="KW-0699">rRNA-binding</keyword>
<keyword id="KW-0820">tRNA-binding</keyword>
<name>RL16_HALHL</name>
<comment type="function">
    <text evidence="1">Binds 23S rRNA and is also seen to make contacts with the A and possibly P site tRNAs.</text>
</comment>
<comment type="subunit">
    <text evidence="1">Part of the 50S ribosomal subunit.</text>
</comment>
<comment type="similarity">
    <text evidence="1">Belongs to the universal ribosomal protein uL16 family.</text>
</comment>
<gene>
    <name evidence="1" type="primary">rplP</name>
    <name type="ordered locus">Hhal_0851</name>
</gene>
<feature type="chain" id="PRO_1000054632" description="Large ribosomal subunit protein uL16">
    <location>
        <begin position="1"/>
        <end position="137"/>
    </location>
</feature>